<dbReference type="EMBL" id="AL049655">
    <property type="protein sequence ID" value="CAB41101.1"/>
    <property type="status" value="ALT_SEQ"/>
    <property type="molecule type" value="Genomic_DNA"/>
</dbReference>
<dbReference type="EMBL" id="AL138650">
    <property type="status" value="NOT_ANNOTATED_CDS"/>
    <property type="molecule type" value="Genomic_DNA"/>
</dbReference>
<dbReference type="EMBL" id="CP002686">
    <property type="protein sequence ID" value="AEE79297.1"/>
    <property type="status" value="ALT_SEQ"/>
    <property type="molecule type" value="Genomic_DNA"/>
</dbReference>
<dbReference type="EMBL" id="CP002686">
    <property type="protein sequence ID" value="ANM64194.1"/>
    <property type="status" value="ALT_SEQ"/>
    <property type="molecule type" value="Genomic_DNA"/>
</dbReference>
<dbReference type="PIR" id="T06737">
    <property type="entry name" value="T06737"/>
</dbReference>
<dbReference type="RefSeq" id="NP_001326240.1">
    <property type="nucleotide sequence ID" value="NM_001339700.1"/>
</dbReference>
<dbReference type="RefSeq" id="NP_191043.2">
    <property type="nucleotide sequence ID" value="NM_115340.3"/>
</dbReference>
<dbReference type="SMR" id="F4JE35"/>
<dbReference type="FunCoup" id="F4JE35">
    <property type="interactions" value="291"/>
</dbReference>
<dbReference type="STRING" id="3702.F4JE35"/>
<dbReference type="PaxDb" id="3702-AT3G54830.1"/>
<dbReference type="PeptideAtlas" id="F4JE35"/>
<dbReference type="ProteomicsDB" id="240936"/>
<dbReference type="GeneID" id="824648"/>
<dbReference type="KEGG" id="ath:AT3G54830"/>
<dbReference type="Araport" id="AT3G54830"/>
<dbReference type="TAIR" id="AT3G54830"/>
<dbReference type="eggNOG" id="KOG1303">
    <property type="taxonomic scope" value="Eukaryota"/>
</dbReference>
<dbReference type="HOGENOM" id="CLU_009646_1_0_1"/>
<dbReference type="InParanoid" id="F4JE35"/>
<dbReference type="PRO" id="PR:F4JE35"/>
<dbReference type="Proteomes" id="UP000006548">
    <property type="component" value="Chromosome 3"/>
</dbReference>
<dbReference type="ExpressionAtlas" id="F4JE35">
    <property type="expression patterns" value="baseline and differential"/>
</dbReference>
<dbReference type="GO" id="GO:0016020">
    <property type="term" value="C:membrane"/>
    <property type="evidence" value="ECO:0000318"/>
    <property type="project" value="GO_Central"/>
</dbReference>
<dbReference type="GO" id="GO:0031090">
    <property type="term" value="C:organelle membrane"/>
    <property type="evidence" value="ECO:0007669"/>
    <property type="project" value="UniProtKB-ARBA"/>
</dbReference>
<dbReference type="GO" id="GO:0015171">
    <property type="term" value="F:amino acid transmembrane transporter activity"/>
    <property type="evidence" value="ECO:0000318"/>
    <property type="project" value="GO_Central"/>
</dbReference>
<dbReference type="GO" id="GO:0003333">
    <property type="term" value="P:amino acid transmembrane transport"/>
    <property type="evidence" value="ECO:0000318"/>
    <property type="project" value="GO_Central"/>
</dbReference>
<dbReference type="FunFam" id="1.20.1740.10:FF:000047">
    <property type="entry name" value="Amino acid transporter AVT1A"/>
    <property type="match status" value="1"/>
</dbReference>
<dbReference type="InterPro" id="IPR013057">
    <property type="entry name" value="AA_transpt_TM"/>
</dbReference>
<dbReference type="PANTHER" id="PTHR22950">
    <property type="entry name" value="AMINO ACID TRANSPORTER"/>
    <property type="match status" value="1"/>
</dbReference>
<dbReference type="PANTHER" id="PTHR22950:SF692">
    <property type="entry name" value="TRANSMEMBRANE AMINO ACID TRANSPORTER FAMILY PROTEIN"/>
    <property type="match status" value="1"/>
</dbReference>
<dbReference type="Pfam" id="PF01490">
    <property type="entry name" value="Aa_trans"/>
    <property type="match status" value="1"/>
</dbReference>
<keyword id="KW-0029">Amino-acid transport</keyword>
<keyword id="KW-0472">Membrane</keyword>
<keyword id="KW-1185">Reference proteome</keyword>
<keyword id="KW-0812">Transmembrane</keyword>
<keyword id="KW-1133">Transmembrane helix</keyword>
<keyword id="KW-0813">Transport</keyword>
<reference key="1">
    <citation type="journal article" date="2000" name="Nature">
        <title>Sequence and analysis of chromosome 3 of the plant Arabidopsis thaliana.</title>
        <authorList>
            <person name="Salanoubat M."/>
            <person name="Lemcke K."/>
            <person name="Rieger M."/>
            <person name="Ansorge W."/>
            <person name="Unseld M."/>
            <person name="Fartmann B."/>
            <person name="Valle G."/>
            <person name="Bloecker H."/>
            <person name="Perez-Alonso M."/>
            <person name="Obermaier B."/>
            <person name="Delseny M."/>
            <person name="Boutry M."/>
            <person name="Grivell L.A."/>
            <person name="Mache R."/>
            <person name="Puigdomenech P."/>
            <person name="De Simone V."/>
            <person name="Choisne N."/>
            <person name="Artiguenave F."/>
            <person name="Robert C."/>
            <person name="Brottier P."/>
            <person name="Wincker P."/>
            <person name="Cattolico L."/>
            <person name="Weissenbach J."/>
            <person name="Saurin W."/>
            <person name="Quetier F."/>
            <person name="Schaefer M."/>
            <person name="Mueller-Auer S."/>
            <person name="Gabel C."/>
            <person name="Fuchs M."/>
            <person name="Benes V."/>
            <person name="Wurmbach E."/>
            <person name="Drzonek H."/>
            <person name="Erfle H."/>
            <person name="Jordan N."/>
            <person name="Bangert S."/>
            <person name="Wiedelmann R."/>
            <person name="Kranz H."/>
            <person name="Voss H."/>
            <person name="Holland R."/>
            <person name="Brandt P."/>
            <person name="Nyakatura G."/>
            <person name="Vezzi A."/>
            <person name="D'Angelo M."/>
            <person name="Pallavicini A."/>
            <person name="Toppo S."/>
            <person name="Simionati B."/>
            <person name="Conrad A."/>
            <person name="Hornischer K."/>
            <person name="Kauer G."/>
            <person name="Loehnert T.-H."/>
            <person name="Nordsiek G."/>
            <person name="Reichelt J."/>
            <person name="Scharfe M."/>
            <person name="Schoen O."/>
            <person name="Bargues M."/>
            <person name="Terol J."/>
            <person name="Climent J."/>
            <person name="Navarro P."/>
            <person name="Collado C."/>
            <person name="Perez-Perez A."/>
            <person name="Ottenwaelder B."/>
            <person name="Duchemin D."/>
            <person name="Cooke R."/>
            <person name="Laudie M."/>
            <person name="Berger-Llauro C."/>
            <person name="Purnelle B."/>
            <person name="Masuy D."/>
            <person name="de Haan M."/>
            <person name="Maarse A.C."/>
            <person name="Alcaraz J.-P."/>
            <person name="Cottet A."/>
            <person name="Casacuberta E."/>
            <person name="Monfort A."/>
            <person name="Argiriou A."/>
            <person name="Flores M."/>
            <person name="Liguori R."/>
            <person name="Vitale D."/>
            <person name="Mannhaupt G."/>
            <person name="Haase D."/>
            <person name="Schoof H."/>
            <person name="Rudd S."/>
            <person name="Zaccaria P."/>
            <person name="Mewes H.-W."/>
            <person name="Mayer K.F.X."/>
            <person name="Kaul S."/>
            <person name="Town C.D."/>
            <person name="Koo H.L."/>
            <person name="Tallon L.J."/>
            <person name="Jenkins J."/>
            <person name="Rooney T."/>
            <person name="Rizzo M."/>
            <person name="Walts A."/>
            <person name="Utterback T."/>
            <person name="Fujii C.Y."/>
            <person name="Shea T.P."/>
            <person name="Creasy T.H."/>
            <person name="Haas B."/>
            <person name="Maiti R."/>
            <person name="Wu D."/>
            <person name="Peterson J."/>
            <person name="Van Aken S."/>
            <person name="Pai G."/>
            <person name="Militscher J."/>
            <person name="Sellers P."/>
            <person name="Gill J.E."/>
            <person name="Feldblyum T.V."/>
            <person name="Preuss D."/>
            <person name="Lin X."/>
            <person name="Nierman W.C."/>
            <person name="Salzberg S.L."/>
            <person name="White O."/>
            <person name="Venter J.C."/>
            <person name="Fraser C.M."/>
            <person name="Kaneko T."/>
            <person name="Nakamura Y."/>
            <person name="Sato S."/>
            <person name="Kato T."/>
            <person name="Asamizu E."/>
            <person name="Sasamoto S."/>
            <person name="Kimura T."/>
            <person name="Idesawa K."/>
            <person name="Kawashima K."/>
            <person name="Kishida Y."/>
            <person name="Kiyokawa C."/>
            <person name="Kohara M."/>
            <person name="Matsumoto M."/>
            <person name="Matsuno A."/>
            <person name="Muraki A."/>
            <person name="Nakayama S."/>
            <person name="Nakazaki N."/>
            <person name="Shinpo S."/>
            <person name="Takeuchi C."/>
            <person name="Wada T."/>
            <person name="Watanabe A."/>
            <person name="Yamada M."/>
            <person name="Yasuda M."/>
            <person name="Tabata S."/>
        </authorList>
    </citation>
    <scope>NUCLEOTIDE SEQUENCE [LARGE SCALE GENOMIC DNA]</scope>
    <source>
        <strain>cv. Columbia</strain>
    </source>
</reference>
<reference key="2">
    <citation type="journal article" date="2017" name="Plant J.">
        <title>Araport11: a complete reannotation of the Arabidopsis thaliana reference genome.</title>
        <authorList>
            <person name="Cheng C.Y."/>
            <person name="Krishnakumar V."/>
            <person name="Chan A.P."/>
            <person name="Thibaud-Nissen F."/>
            <person name="Schobel S."/>
            <person name="Town C.D."/>
        </authorList>
    </citation>
    <scope>GENOME REANNOTATION</scope>
    <source>
        <strain>cv. Columbia</strain>
    </source>
</reference>
<reference key="3">
    <citation type="journal article" date="2017" name="FEBS Lett.">
        <title>Functional identification of AtAVT3, a family of vacuolar amino acid transporters, in Arabidopsis.</title>
        <authorList>
            <person name="Fujiki Y."/>
            <person name="Teshima H."/>
            <person name="Kashiwao S."/>
            <person name="Kawano-Kawada M."/>
            <person name="Ohsumi Y."/>
            <person name="Kakinuma Y."/>
            <person name="Sekito T."/>
        </authorList>
    </citation>
    <scope>GENE FAMILY</scope>
    <scope>NOMENCLATURE</scope>
</reference>
<name>AVT1B_ARATH</name>
<evidence type="ECO:0000255" key="1"/>
<evidence type="ECO:0000256" key="2">
    <source>
        <dbReference type="SAM" id="MobiDB-lite"/>
    </source>
</evidence>
<evidence type="ECO:0000303" key="3">
    <source>
    </source>
</evidence>
<evidence type="ECO:0000305" key="4"/>
<evidence type="ECO:0000312" key="5">
    <source>
        <dbReference type="Araport" id="AT3G54830"/>
    </source>
</evidence>
<evidence type="ECO:0000312" key="6">
    <source>
        <dbReference type="EMBL" id="AL138650"/>
    </source>
</evidence>
<evidence type="ECO:0000312" key="7">
    <source>
        <dbReference type="EMBL" id="CAB41101.1"/>
    </source>
</evidence>
<comment type="subcellular location">
    <subcellularLocation>
        <location evidence="1">Membrane</location>
        <topology evidence="1">Multi-pass membrane protein</topology>
    </subcellularLocation>
</comment>
<comment type="similarity">
    <text evidence="4">Belongs to the amino acid/polyamine transporter 2 family. Amino acid/auxin permease (AAAP) (TC 2.A.18.5) subfamily.</text>
</comment>
<comment type="sequence caution" evidence="4">
    <conflict type="erroneous gene model prediction">
        <sequence resource="EMBL-CDS" id="AEE79297"/>
    </conflict>
</comment>
<comment type="sequence caution" evidence="4">
    <conflict type="erroneous gene model prediction">
        <sequence resource="EMBL-CDS" id="ANM64194"/>
    </conflict>
</comment>
<comment type="sequence caution" evidence="4">
    <conflict type="erroneous gene model prediction">
        <sequence resource="EMBL-CDS" id="CAB41101"/>
    </conflict>
</comment>
<gene>
    <name evidence="3" type="primary">AVT1B</name>
    <name evidence="5" type="ordered locus">At3g54830</name>
    <name evidence="7" type="ORF">F28P10.190</name>
    <name evidence="6" type="ORF">T5N23.1</name>
</gene>
<protein>
    <recommendedName>
        <fullName evidence="4">Amino acid transporter AVT1B</fullName>
        <shortName evidence="3">AtAvt1B</shortName>
    </recommendedName>
</protein>
<proteinExistence type="inferred from homology"/>
<sequence>MNHSTSDQSLYIESDDGDDERKHLSDDEDDDGTLSDTSDAYNQNQHHLSKASPYSTAWPKSYRQSIDMFGSVPSPNLGFLANSSMSRRGSSFMSSTLTRRHTPESLPCVTKPLLEDEEAPKHKLSTHSLLPSKPSSSMVVSHDMGISNDSSFGQAVLNGVNVLCGVGILSTPYAVKEGGWLGLIILFAFGILCFYTGLLLRYCLDSHPDVQTYPDIGHAAFGSTGRILVSVILYMELYAMSVEYIILEGDNLSSMFPNASLSIGGFHLDAPRLFALLTTLAVLPTVWLRDLSVLSYISAGGVIASVLVVLCLFWVGLVDDVGIHSKGTPLNLATLPVSVGLYGYCYSGHGVFPNIYTSMAKPSQFSAVLLASFGICTLMYAGVAVMGYSMFGESTESQFTLNLPQDLVASKIALWTTVVNPFTKYALTLSPVAMSLEELIPSNYGKSRFYAIAIRSALAISTLLVGLAIPFFGLVMSLIGSFLTMLITLILPPACFLSILRKKVTPTQVTICILIMTVGAVCSVIGTYSALAKIIEKLNT</sequence>
<feature type="chain" id="PRO_0000440103" description="Amino acid transporter AVT1B">
    <location>
        <begin position="1"/>
        <end position="540"/>
    </location>
</feature>
<feature type="transmembrane region" description="Helical; Name=1" evidence="1">
    <location>
        <begin position="155"/>
        <end position="175"/>
    </location>
</feature>
<feature type="transmembrane region" description="Helical; Name=2" evidence="1">
    <location>
        <begin position="180"/>
        <end position="200"/>
    </location>
</feature>
<feature type="transmembrane region" description="Helical; Name=3" evidence="1">
    <location>
        <begin position="227"/>
        <end position="247"/>
    </location>
</feature>
<feature type="transmembrane region" description="Helical; Name=4" evidence="1">
    <location>
        <begin position="273"/>
        <end position="293"/>
    </location>
</feature>
<feature type="transmembrane region" description="Helical; Name=5" evidence="1">
    <location>
        <begin position="297"/>
        <end position="317"/>
    </location>
</feature>
<feature type="transmembrane region" description="Helical; Name=6" evidence="1">
    <location>
        <begin position="332"/>
        <end position="352"/>
    </location>
</feature>
<feature type="transmembrane region" description="Helical; Name=7" evidence="1">
    <location>
        <begin position="367"/>
        <end position="387"/>
    </location>
</feature>
<feature type="transmembrane region" description="Helical; Name=8" evidence="1">
    <location>
        <begin position="412"/>
        <end position="432"/>
    </location>
</feature>
<feature type="transmembrane region" description="Helical; Name=9" evidence="1">
    <location>
        <begin position="452"/>
        <end position="474"/>
    </location>
</feature>
<feature type="transmembrane region" description="Helical; Name=10" evidence="1">
    <location>
        <begin position="478"/>
        <end position="500"/>
    </location>
</feature>
<feature type="transmembrane region" description="Helical; Name=11" evidence="1">
    <location>
        <begin position="511"/>
        <end position="531"/>
    </location>
</feature>
<feature type="region of interest" description="Disordered" evidence="2">
    <location>
        <begin position="1"/>
        <end position="55"/>
    </location>
</feature>
<feature type="compositionally biased region" description="Polar residues" evidence="2">
    <location>
        <begin position="1"/>
        <end position="11"/>
    </location>
</feature>
<organism>
    <name type="scientific">Arabidopsis thaliana</name>
    <name type="common">Mouse-ear cress</name>
    <dbReference type="NCBI Taxonomy" id="3702"/>
    <lineage>
        <taxon>Eukaryota</taxon>
        <taxon>Viridiplantae</taxon>
        <taxon>Streptophyta</taxon>
        <taxon>Embryophyta</taxon>
        <taxon>Tracheophyta</taxon>
        <taxon>Spermatophyta</taxon>
        <taxon>Magnoliopsida</taxon>
        <taxon>eudicotyledons</taxon>
        <taxon>Gunneridae</taxon>
        <taxon>Pentapetalae</taxon>
        <taxon>rosids</taxon>
        <taxon>malvids</taxon>
        <taxon>Brassicales</taxon>
        <taxon>Brassicaceae</taxon>
        <taxon>Camelineae</taxon>
        <taxon>Arabidopsis</taxon>
    </lineage>
</organism>
<accession>F4JE35</accession>
<accession>Q9SV32</accession>